<name>NDHM_PROM4</name>
<protein>
    <recommendedName>
        <fullName evidence="1">NAD(P)H-quinone oxidoreductase subunit M</fullName>
        <ecNumber evidence="1">7.1.1.-</ecNumber>
    </recommendedName>
    <alternativeName>
        <fullName evidence="1">NAD(P)H dehydrogenase I subunit M</fullName>
        <shortName evidence="1">NDH-1 subunit M</shortName>
        <shortName evidence="1">NDH-M</shortName>
    </alternativeName>
</protein>
<feature type="chain" id="PRO_0000352187" description="NAD(P)H-quinone oxidoreductase subunit M">
    <location>
        <begin position="1"/>
        <end position="115"/>
    </location>
</feature>
<gene>
    <name evidence="1" type="primary">ndhM</name>
    <name type="ordered locus">P9211_01601</name>
</gene>
<proteinExistence type="inferred from homology"/>
<reference key="1">
    <citation type="journal article" date="2007" name="PLoS Genet.">
        <title>Patterns and implications of gene gain and loss in the evolution of Prochlorococcus.</title>
        <authorList>
            <person name="Kettler G.C."/>
            <person name="Martiny A.C."/>
            <person name="Huang K."/>
            <person name="Zucker J."/>
            <person name="Coleman M.L."/>
            <person name="Rodrigue S."/>
            <person name="Chen F."/>
            <person name="Lapidus A."/>
            <person name="Ferriera S."/>
            <person name="Johnson J."/>
            <person name="Steglich C."/>
            <person name="Church G.M."/>
            <person name="Richardson P."/>
            <person name="Chisholm S.W."/>
        </authorList>
    </citation>
    <scope>NUCLEOTIDE SEQUENCE [LARGE SCALE GENOMIC DNA]</scope>
    <source>
        <strain>MIT 9211</strain>
    </source>
</reference>
<keyword id="KW-0472">Membrane</keyword>
<keyword id="KW-0520">NAD</keyword>
<keyword id="KW-0521">NADP</keyword>
<keyword id="KW-0618">Plastoquinone</keyword>
<keyword id="KW-0874">Quinone</keyword>
<keyword id="KW-1185">Reference proteome</keyword>
<keyword id="KW-0793">Thylakoid</keyword>
<keyword id="KW-1278">Translocase</keyword>
<keyword id="KW-0813">Transport</keyword>
<dbReference type="EC" id="7.1.1.-" evidence="1"/>
<dbReference type="EMBL" id="CP000878">
    <property type="protein sequence ID" value="ABX08091.1"/>
    <property type="molecule type" value="Genomic_DNA"/>
</dbReference>
<dbReference type="RefSeq" id="WP_012194716.1">
    <property type="nucleotide sequence ID" value="NC_009976.1"/>
</dbReference>
<dbReference type="SMR" id="A9BD03"/>
<dbReference type="STRING" id="93059.P9211_01601"/>
<dbReference type="KEGG" id="pmj:P9211_01601"/>
<dbReference type="eggNOG" id="ENOG5031AQM">
    <property type="taxonomic scope" value="Bacteria"/>
</dbReference>
<dbReference type="HOGENOM" id="CLU_137431_0_0_3"/>
<dbReference type="OrthoDB" id="461686at2"/>
<dbReference type="Proteomes" id="UP000000788">
    <property type="component" value="Chromosome"/>
</dbReference>
<dbReference type="GO" id="GO:0031676">
    <property type="term" value="C:plasma membrane-derived thylakoid membrane"/>
    <property type="evidence" value="ECO:0007669"/>
    <property type="project" value="UniProtKB-SubCell"/>
</dbReference>
<dbReference type="GO" id="GO:0016655">
    <property type="term" value="F:oxidoreductase activity, acting on NAD(P)H, quinone or similar compound as acceptor"/>
    <property type="evidence" value="ECO:0007669"/>
    <property type="project" value="UniProtKB-UniRule"/>
</dbReference>
<dbReference type="GO" id="GO:0048038">
    <property type="term" value="F:quinone binding"/>
    <property type="evidence" value="ECO:0007669"/>
    <property type="project" value="UniProtKB-KW"/>
</dbReference>
<dbReference type="HAMAP" id="MF_01352">
    <property type="entry name" value="NDH1_NDH1M"/>
    <property type="match status" value="1"/>
</dbReference>
<dbReference type="InterPro" id="IPR018922">
    <property type="entry name" value="NdhM"/>
</dbReference>
<dbReference type="PANTHER" id="PTHR36900">
    <property type="entry name" value="NAD(P)H-QUINONE OXIDOREDUCTASE SUBUNIT M, CHLOROPLASTIC"/>
    <property type="match status" value="1"/>
</dbReference>
<dbReference type="PANTHER" id="PTHR36900:SF1">
    <property type="entry name" value="NAD(P)H-QUINONE OXIDOREDUCTASE SUBUNIT M, CHLOROPLASTIC"/>
    <property type="match status" value="1"/>
</dbReference>
<dbReference type="Pfam" id="PF10664">
    <property type="entry name" value="NdhM"/>
    <property type="match status" value="1"/>
</dbReference>
<accession>A9BD03</accession>
<comment type="function">
    <text evidence="1">NDH-1 shuttles electrons from an unknown electron donor, via FMN and iron-sulfur (Fe-S) centers, to quinones in the respiratory and/or the photosynthetic chain. The immediate electron acceptor for the enzyme in this species is believed to be plastoquinone. Couples the redox reaction to proton translocation, and thus conserves the redox energy in a proton gradient. Cyanobacterial NDH-1 also plays a role in inorganic carbon-concentration.</text>
</comment>
<comment type="catalytic activity">
    <reaction evidence="1">
        <text>a plastoquinone + NADH + (n+1) H(+)(in) = a plastoquinol + NAD(+) + n H(+)(out)</text>
        <dbReference type="Rhea" id="RHEA:42608"/>
        <dbReference type="Rhea" id="RHEA-COMP:9561"/>
        <dbReference type="Rhea" id="RHEA-COMP:9562"/>
        <dbReference type="ChEBI" id="CHEBI:15378"/>
        <dbReference type="ChEBI" id="CHEBI:17757"/>
        <dbReference type="ChEBI" id="CHEBI:57540"/>
        <dbReference type="ChEBI" id="CHEBI:57945"/>
        <dbReference type="ChEBI" id="CHEBI:62192"/>
    </reaction>
</comment>
<comment type="catalytic activity">
    <reaction evidence="1">
        <text>a plastoquinone + NADPH + (n+1) H(+)(in) = a plastoquinol + NADP(+) + n H(+)(out)</text>
        <dbReference type="Rhea" id="RHEA:42612"/>
        <dbReference type="Rhea" id="RHEA-COMP:9561"/>
        <dbReference type="Rhea" id="RHEA-COMP:9562"/>
        <dbReference type="ChEBI" id="CHEBI:15378"/>
        <dbReference type="ChEBI" id="CHEBI:17757"/>
        <dbReference type="ChEBI" id="CHEBI:57783"/>
        <dbReference type="ChEBI" id="CHEBI:58349"/>
        <dbReference type="ChEBI" id="CHEBI:62192"/>
    </reaction>
</comment>
<comment type="subunit">
    <text evidence="1">NDH-1 can be composed of about 15 different subunits; different subcomplexes with different compositions have been identified which probably have different functions.</text>
</comment>
<comment type="subcellular location">
    <subcellularLocation>
        <location evidence="1">Cellular thylakoid membrane</location>
        <topology evidence="1">Peripheral membrane protein</topology>
        <orientation evidence="1">Cytoplasmic side</orientation>
    </subcellularLocation>
</comment>
<comment type="similarity">
    <text evidence="1">Belongs to the complex I NdhM subunit family.</text>
</comment>
<evidence type="ECO:0000255" key="1">
    <source>
        <dbReference type="HAMAP-Rule" id="MF_01352"/>
    </source>
</evidence>
<sequence>MTDSILKCTTRHIRIFTARCENNDLVQDSEHLTLDLDPDNEFIWEELVIGKVHKRFSELVDSYSGKDLSDYNLRKIGSDLEGTIRQLLQAGELKYNPDCRVLNYSMGLPRTKDLL</sequence>
<organism>
    <name type="scientific">Prochlorococcus marinus (strain MIT 9211)</name>
    <dbReference type="NCBI Taxonomy" id="93059"/>
    <lineage>
        <taxon>Bacteria</taxon>
        <taxon>Bacillati</taxon>
        <taxon>Cyanobacteriota</taxon>
        <taxon>Cyanophyceae</taxon>
        <taxon>Synechococcales</taxon>
        <taxon>Prochlorococcaceae</taxon>
        <taxon>Prochlorococcus</taxon>
    </lineage>
</organism>